<evidence type="ECO:0000255" key="1">
    <source>
        <dbReference type="HAMAP-Rule" id="MF_00164"/>
    </source>
</evidence>
<name>GLMS_STAAR</name>
<gene>
    <name evidence="1" type="primary">glmS</name>
    <name type="synonym">gcaA</name>
    <name type="ordered locus">SAR2242</name>
</gene>
<feature type="initiator methionine" description="Removed" evidence="1">
    <location>
        <position position="1"/>
    </location>
</feature>
<feature type="chain" id="PRO_0000135382" description="Glutamine--fructose-6-phosphate aminotransferase [isomerizing]">
    <location>
        <begin position="2"/>
        <end position="601"/>
    </location>
</feature>
<feature type="domain" description="Glutamine amidotransferase type-2" evidence="1">
    <location>
        <begin position="2"/>
        <end position="218"/>
    </location>
</feature>
<feature type="domain" description="SIS 1" evidence="1">
    <location>
        <begin position="284"/>
        <end position="423"/>
    </location>
</feature>
<feature type="domain" description="SIS 2" evidence="1">
    <location>
        <begin position="453"/>
        <end position="591"/>
    </location>
</feature>
<feature type="active site" description="Nucleophile; for GATase activity" evidence="1">
    <location>
        <position position="2"/>
    </location>
</feature>
<feature type="active site" description="For Fru-6P isomerization activity" evidence="1">
    <location>
        <position position="596"/>
    </location>
</feature>
<dbReference type="EC" id="2.6.1.16" evidence="1"/>
<dbReference type="EMBL" id="BX571856">
    <property type="protein sequence ID" value="CAG41223.1"/>
    <property type="molecule type" value="Genomic_DNA"/>
</dbReference>
<dbReference type="RefSeq" id="WP_000334466.1">
    <property type="nucleotide sequence ID" value="NC_002952.2"/>
</dbReference>
<dbReference type="SMR" id="Q6GES3"/>
<dbReference type="KEGG" id="sar:SAR2242"/>
<dbReference type="HOGENOM" id="CLU_012520_7_1_9"/>
<dbReference type="BRENDA" id="2.6.1.16">
    <property type="organism ID" value="3352"/>
</dbReference>
<dbReference type="Proteomes" id="UP000000596">
    <property type="component" value="Chromosome"/>
</dbReference>
<dbReference type="GO" id="GO:0005829">
    <property type="term" value="C:cytosol"/>
    <property type="evidence" value="ECO:0007669"/>
    <property type="project" value="TreeGrafter"/>
</dbReference>
<dbReference type="GO" id="GO:0097367">
    <property type="term" value="F:carbohydrate derivative binding"/>
    <property type="evidence" value="ECO:0007669"/>
    <property type="project" value="InterPro"/>
</dbReference>
<dbReference type="GO" id="GO:0004360">
    <property type="term" value="F:glutamine-fructose-6-phosphate transaminase (isomerizing) activity"/>
    <property type="evidence" value="ECO:0007669"/>
    <property type="project" value="UniProtKB-UniRule"/>
</dbReference>
<dbReference type="GO" id="GO:0005975">
    <property type="term" value="P:carbohydrate metabolic process"/>
    <property type="evidence" value="ECO:0007669"/>
    <property type="project" value="UniProtKB-UniRule"/>
</dbReference>
<dbReference type="GO" id="GO:0006002">
    <property type="term" value="P:fructose 6-phosphate metabolic process"/>
    <property type="evidence" value="ECO:0007669"/>
    <property type="project" value="TreeGrafter"/>
</dbReference>
<dbReference type="GO" id="GO:0006487">
    <property type="term" value="P:protein N-linked glycosylation"/>
    <property type="evidence" value="ECO:0007669"/>
    <property type="project" value="TreeGrafter"/>
</dbReference>
<dbReference type="GO" id="GO:0006047">
    <property type="term" value="P:UDP-N-acetylglucosamine metabolic process"/>
    <property type="evidence" value="ECO:0007669"/>
    <property type="project" value="TreeGrafter"/>
</dbReference>
<dbReference type="CDD" id="cd00714">
    <property type="entry name" value="GFAT"/>
    <property type="match status" value="1"/>
</dbReference>
<dbReference type="CDD" id="cd05008">
    <property type="entry name" value="SIS_GlmS_GlmD_1"/>
    <property type="match status" value="1"/>
</dbReference>
<dbReference type="CDD" id="cd05009">
    <property type="entry name" value="SIS_GlmS_GlmD_2"/>
    <property type="match status" value="1"/>
</dbReference>
<dbReference type="FunFam" id="3.40.50.10490:FF:000001">
    <property type="entry name" value="Glutamine--fructose-6-phosphate aminotransferase [isomerizing]"/>
    <property type="match status" value="1"/>
</dbReference>
<dbReference type="FunFam" id="3.40.50.10490:FF:000022">
    <property type="entry name" value="Glutamine--fructose-6-phosphate aminotransferase [isomerizing]"/>
    <property type="match status" value="1"/>
</dbReference>
<dbReference type="FunFam" id="3.60.20.10:FF:000006">
    <property type="entry name" value="Glutamine--fructose-6-phosphate aminotransferase [isomerizing]"/>
    <property type="match status" value="1"/>
</dbReference>
<dbReference type="Gene3D" id="3.40.50.10490">
    <property type="entry name" value="Glucose-6-phosphate isomerase like protein, domain 1"/>
    <property type="match status" value="2"/>
</dbReference>
<dbReference type="Gene3D" id="3.60.20.10">
    <property type="entry name" value="Glutamine Phosphoribosylpyrophosphate, subunit 1, domain 1"/>
    <property type="match status" value="1"/>
</dbReference>
<dbReference type="HAMAP" id="MF_00164">
    <property type="entry name" value="GlmS"/>
    <property type="match status" value="1"/>
</dbReference>
<dbReference type="InterPro" id="IPR017932">
    <property type="entry name" value="GATase_2_dom"/>
</dbReference>
<dbReference type="InterPro" id="IPR005855">
    <property type="entry name" value="GFAT"/>
</dbReference>
<dbReference type="InterPro" id="IPR047084">
    <property type="entry name" value="GFAT_N"/>
</dbReference>
<dbReference type="InterPro" id="IPR035466">
    <property type="entry name" value="GlmS/AgaS_SIS"/>
</dbReference>
<dbReference type="InterPro" id="IPR035490">
    <property type="entry name" value="GlmS/FrlB_SIS"/>
</dbReference>
<dbReference type="InterPro" id="IPR029055">
    <property type="entry name" value="Ntn_hydrolases_N"/>
</dbReference>
<dbReference type="InterPro" id="IPR001347">
    <property type="entry name" value="SIS_dom"/>
</dbReference>
<dbReference type="InterPro" id="IPR046348">
    <property type="entry name" value="SIS_dom_sf"/>
</dbReference>
<dbReference type="NCBIfam" id="TIGR01135">
    <property type="entry name" value="glmS"/>
    <property type="match status" value="1"/>
</dbReference>
<dbReference type="NCBIfam" id="NF001484">
    <property type="entry name" value="PRK00331.1"/>
    <property type="match status" value="1"/>
</dbReference>
<dbReference type="PANTHER" id="PTHR10937">
    <property type="entry name" value="GLUCOSAMINE--FRUCTOSE-6-PHOSPHATE AMINOTRANSFERASE, ISOMERIZING"/>
    <property type="match status" value="1"/>
</dbReference>
<dbReference type="PANTHER" id="PTHR10937:SF0">
    <property type="entry name" value="GLUTAMINE--FRUCTOSE-6-PHOSPHATE TRANSAMINASE (ISOMERIZING)"/>
    <property type="match status" value="1"/>
</dbReference>
<dbReference type="Pfam" id="PF13522">
    <property type="entry name" value="GATase_6"/>
    <property type="match status" value="1"/>
</dbReference>
<dbReference type="Pfam" id="PF01380">
    <property type="entry name" value="SIS"/>
    <property type="match status" value="2"/>
</dbReference>
<dbReference type="SUPFAM" id="SSF56235">
    <property type="entry name" value="N-terminal nucleophile aminohydrolases (Ntn hydrolases)"/>
    <property type="match status" value="1"/>
</dbReference>
<dbReference type="SUPFAM" id="SSF53697">
    <property type="entry name" value="SIS domain"/>
    <property type="match status" value="1"/>
</dbReference>
<dbReference type="PROSITE" id="PS51278">
    <property type="entry name" value="GATASE_TYPE_2"/>
    <property type="match status" value="1"/>
</dbReference>
<dbReference type="PROSITE" id="PS51464">
    <property type="entry name" value="SIS"/>
    <property type="match status" value="2"/>
</dbReference>
<organism>
    <name type="scientific">Staphylococcus aureus (strain MRSA252)</name>
    <dbReference type="NCBI Taxonomy" id="282458"/>
    <lineage>
        <taxon>Bacteria</taxon>
        <taxon>Bacillati</taxon>
        <taxon>Bacillota</taxon>
        <taxon>Bacilli</taxon>
        <taxon>Bacillales</taxon>
        <taxon>Staphylococcaceae</taxon>
        <taxon>Staphylococcus</taxon>
    </lineage>
</organism>
<protein>
    <recommendedName>
        <fullName evidence="1">Glutamine--fructose-6-phosphate aminotransferase [isomerizing]</fullName>
        <ecNumber evidence="1">2.6.1.16</ecNumber>
    </recommendedName>
    <alternativeName>
        <fullName evidence="1">D-fructose-6-phosphate amidotransferase</fullName>
    </alternativeName>
    <alternativeName>
        <fullName evidence="1">GFAT</fullName>
    </alternativeName>
    <alternativeName>
        <fullName evidence="1">Glucosamine-6-phosphate synthase</fullName>
    </alternativeName>
    <alternativeName>
        <fullName evidence="1">Hexosephosphate aminotransferase</fullName>
    </alternativeName>
    <alternativeName>
        <fullName evidence="1">L-glutamine--D-fructose-6-phosphate amidotransferase</fullName>
    </alternativeName>
</protein>
<reference key="1">
    <citation type="journal article" date="2004" name="Proc. Natl. Acad. Sci. U.S.A.">
        <title>Complete genomes of two clinical Staphylococcus aureus strains: evidence for the rapid evolution of virulence and drug resistance.</title>
        <authorList>
            <person name="Holden M.T.G."/>
            <person name="Feil E.J."/>
            <person name="Lindsay J.A."/>
            <person name="Peacock S.J."/>
            <person name="Day N.P.J."/>
            <person name="Enright M.C."/>
            <person name="Foster T.J."/>
            <person name="Moore C.E."/>
            <person name="Hurst L."/>
            <person name="Atkin R."/>
            <person name="Barron A."/>
            <person name="Bason N."/>
            <person name="Bentley S.D."/>
            <person name="Chillingworth C."/>
            <person name="Chillingworth T."/>
            <person name="Churcher C."/>
            <person name="Clark L."/>
            <person name="Corton C."/>
            <person name="Cronin A."/>
            <person name="Doggett J."/>
            <person name="Dowd L."/>
            <person name="Feltwell T."/>
            <person name="Hance Z."/>
            <person name="Harris B."/>
            <person name="Hauser H."/>
            <person name="Holroyd S."/>
            <person name="Jagels K."/>
            <person name="James K.D."/>
            <person name="Lennard N."/>
            <person name="Line A."/>
            <person name="Mayes R."/>
            <person name="Moule S."/>
            <person name="Mungall K."/>
            <person name="Ormond D."/>
            <person name="Quail M.A."/>
            <person name="Rabbinowitsch E."/>
            <person name="Rutherford K.M."/>
            <person name="Sanders M."/>
            <person name="Sharp S."/>
            <person name="Simmonds M."/>
            <person name="Stevens K."/>
            <person name="Whitehead S."/>
            <person name="Barrell B.G."/>
            <person name="Spratt B.G."/>
            <person name="Parkhill J."/>
        </authorList>
    </citation>
    <scope>NUCLEOTIDE SEQUENCE [LARGE SCALE GENOMIC DNA]</scope>
    <source>
        <strain>MRSA252</strain>
    </source>
</reference>
<proteinExistence type="inferred from homology"/>
<sequence>MCGIVGYIGYDNAKELLLKGLEKLEYRGYDSAGIAVVNDDNTTVFKEKGRIAELRKVADSSDFDGPVGIGHTRWATHGVPNHENSHPHQSSNGRFTLVHNGVIENYEELKGEYLQGVSFISETDTEVIVQLVEYFSNQGLSTEEAFTKVVSLLHGSYALGLLDAEDKDTIYVAKNKSPLLLGVGEGFNVIASDALAMLQVTSEYKEIHDHEIVIVKKDEVIIKDADGNVVERDSYIAEIDASDAEKGVYAHYMLKEIHEQPAVMRRIIQEYQDAEGNLKIDQDIINDVKEADRIYVIAAGTSYHAGLVGKEFLEKWAGVPTEVHVASEFVYNMPLLSEKPLFVYISQSGETADSRAVLVETNKLGHKSLTITNVAGSTLSREADHTLLLHAGPEIAVASTKAYTAQIAVLSILSQIVAKEHGREADIDLLRELAKVTTAIEAIVDDAPIMEQIATDFLETTRNAFFIGRTIDYNVSLEGALKLKEISYIQAEGFAGGELKHGTIALIEEGTPVVGLATQEKVNLSIRGNVKEVVARGAHPCIISMEGLEKEGDTYVIPHVHELLTPLVSVVTLQLISYYAALHRDLDVDKPRNLAKSVTVE</sequence>
<keyword id="KW-0032">Aminotransferase</keyword>
<keyword id="KW-0963">Cytoplasm</keyword>
<keyword id="KW-0315">Glutamine amidotransferase</keyword>
<keyword id="KW-0677">Repeat</keyword>
<keyword id="KW-0808">Transferase</keyword>
<accession>Q6GES3</accession>
<comment type="function">
    <text evidence="1">Catalyzes the first step in hexosamine metabolism, converting fructose-6P into glucosamine-6P using glutamine as a nitrogen source.</text>
</comment>
<comment type="catalytic activity">
    <reaction evidence="1">
        <text>D-fructose 6-phosphate + L-glutamine = D-glucosamine 6-phosphate + L-glutamate</text>
        <dbReference type="Rhea" id="RHEA:13237"/>
        <dbReference type="ChEBI" id="CHEBI:29985"/>
        <dbReference type="ChEBI" id="CHEBI:58359"/>
        <dbReference type="ChEBI" id="CHEBI:58725"/>
        <dbReference type="ChEBI" id="CHEBI:61527"/>
        <dbReference type="EC" id="2.6.1.16"/>
    </reaction>
</comment>
<comment type="subunit">
    <text evidence="1">Homodimer.</text>
</comment>
<comment type="subcellular location">
    <subcellularLocation>
        <location evidence="1">Cytoplasm</location>
    </subcellularLocation>
</comment>